<proteinExistence type="inferred from homology"/>
<evidence type="ECO:0000255" key="1">
    <source>
        <dbReference type="HAMAP-Rule" id="MF_01195"/>
    </source>
</evidence>
<evidence type="ECO:0000305" key="2"/>
<protein>
    <recommendedName>
        <fullName evidence="1">N-acetylneuraminate epimerase</fullName>
        <ecNumber evidence="1">5.1.3.24</ecNumber>
    </recommendedName>
    <alternativeName>
        <fullName evidence="1">N-acetylneuraminate mutarotase</fullName>
        <shortName evidence="1">Neu5Ac mutarotase</shortName>
    </alternativeName>
    <alternativeName>
        <fullName evidence="1">Sialic acid epimerase</fullName>
    </alternativeName>
</protein>
<name>NANM_ECO57</name>
<organism>
    <name type="scientific">Escherichia coli O157:H7</name>
    <dbReference type="NCBI Taxonomy" id="83334"/>
    <lineage>
        <taxon>Bacteria</taxon>
        <taxon>Pseudomonadati</taxon>
        <taxon>Pseudomonadota</taxon>
        <taxon>Gammaproteobacteria</taxon>
        <taxon>Enterobacterales</taxon>
        <taxon>Enterobacteriaceae</taxon>
        <taxon>Escherichia</taxon>
    </lineage>
</organism>
<dbReference type="EC" id="5.1.3.24" evidence="1"/>
<dbReference type="EMBL" id="AE005174">
    <property type="protein sequence ID" value="AAG59492.1"/>
    <property type="status" value="ALT_INIT"/>
    <property type="molecule type" value="Genomic_DNA"/>
</dbReference>
<dbReference type="EMBL" id="BA000007">
    <property type="protein sequence ID" value="BAB38692.1"/>
    <property type="status" value="ALT_INIT"/>
    <property type="molecule type" value="Genomic_DNA"/>
</dbReference>
<dbReference type="PIR" id="E91287">
    <property type="entry name" value="E91287"/>
</dbReference>
<dbReference type="PIR" id="H86128">
    <property type="entry name" value="H86128"/>
</dbReference>
<dbReference type="RefSeq" id="NP_313296.1">
    <property type="nucleotide sequence ID" value="NC_002695.1"/>
</dbReference>
<dbReference type="RefSeq" id="WP_001301833.1">
    <property type="nucleotide sequence ID" value="NZ_VOAI01000002.1"/>
</dbReference>
<dbReference type="SMR" id="Q8X554"/>
<dbReference type="STRING" id="155864.Z5906"/>
<dbReference type="KEGG" id="ece:Z5906"/>
<dbReference type="KEGG" id="ecs:ECs_5269"/>
<dbReference type="PATRIC" id="fig|386585.9.peg.5503"/>
<dbReference type="eggNOG" id="COG3055">
    <property type="taxonomic scope" value="Bacteria"/>
</dbReference>
<dbReference type="HOGENOM" id="CLU_061535_0_0_6"/>
<dbReference type="OMA" id="FNGFFQD"/>
<dbReference type="Proteomes" id="UP000000558">
    <property type="component" value="Chromosome"/>
</dbReference>
<dbReference type="Proteomes" id="UP000002519">
    <property type="component" value="Chromosome"/>
</dbReference>
<dbReference type="GO" id="GO:0042597">
    <property type="term" value="C:periplasmic space"/>
    <property type="evidence" value="ECO:0007669"/>
    <property type="project" value="UniProtKB-SubCell"/>
</dbReference>
<dbReference type="GO" id="GO:0016857">
    <property type="term" value="F:racemase and epimerase activity, acting on carbohydrates and derivatives"/>
    <property type="evidence" value="ECO:0007669"/>
    <property type="project" value="UniProtKB-UniRule"/>
</dbReference>
<dbReference type="FunFam" id="2.120.10.80:FF:000061">
    <property type="entry name" value="N-acetylneuraminate epimerase"/>
    <property type="match status" value="1"/>
</dbReference>
<dbReference type="FunFam" id="2.120.10.80:FF:000067">
    <property type="entry name" value="N-acetylneuraminate epimerase"/>
    <property type="match status" value="1"/>
</dbReference>
<dbReference type="Gene3D" id="2.120.10.80">
    <property type="entry name" value="Kelch-type beta propeller"/>
    <property type="match status" value="2"/>
</dbReference>
<dbReference type="HAMAP" id="MF_01195">
    <property type="entry name" value="NanM"/>
    <property type="match status" value="1"/>
</dbReference>
<dbReference type="InterPro" id="IPR015915">
    <property type="entry name" value="Kelch-typ_b-propeller"/>
</dbReference>
<dbReference type="InterPro" id="IPR056734">
    <property type="entry name" value="NANM"/>
</dbReference>
<dbReference type="InterPro" id="IPR019936">
    <property type="entry name" value="NanM_proteobact"/>
</dbReference>
<dbReference type="NCBIfam" id="TIGR03547">
    <property type="entry name" value="muta_rot_YjhT"/>
    <property type="match status" value="1"/>
</dbReference>
<dbReference type="NCBIfam" id="NF010730">
    <property type="entry name" value="PRK14131.1"/>
    <property type="match status" value="1"/>
</dbReference>
<dbReference type="PANTHER" id="PTHR45632:SF3">
    <property type="entry name" value="KELCH-LIKE PROTEIN 32"/>
    <property type="match status" value="1"/>
</dbReference>
<dbReference type="PANTHER" id="PTHR45632">
    <property type="entry name" value="LD33804P"/>
    <property type="match status" value="1"/>
</dbReference>
<dbReference type="Pfam" id="PF24996">
    <property type="entry name" value="NANM"/>
    <property type="match status" value="1"/>
</dbReference>
<dbReference type="SUPFAM" id="SSF117281">
    <property type="entry name" value="Kelch motif"/>
    <property type="match status" value="1"/>
</dbReference>
<accession>Q8X554</accession>
<accession>Q7A8N2</accession>
<reference key="1">
    <citation type="journal article" date="2001" name="Nature">
        <title>Genome sequence of enterohaemorrhagic Escherichia coli O157:H7.</title>
        <authorList>
            <person name="Perna N.T."/>
            <person name="Plunkett G. III"/>
            <person name="Burland V."/>
            <person name="Mau B."/>
            <person name="Glasner J.D."/>
            <person name="Rose D.J."/>
            <person name="Mayhew G.F."/>
            <person name="Evans P.S."/>
            <person name="Gregor J."/>
            <person name="Kirkpatrick H.A."/>
            <person name="Posfai G."/>
            <person name="Hackett J."/>
            <person name="Klink S."/>
            <person name="Boutin A."/>
            <person name="Shao Y."/>
            <person name="Miller L."/>
            <person name="Grotbeck E.J."/>
            <person name="Davis N.W."/>
            <person name="Lim A."/>
            <person name="Dimalanta E.T."/>
            <person name="Potamousis K."/>
            <person name="Apodaca J."/>
            <person name="Anantharaman T.S."/>
            <person name="Lin J."/>
            <person name="Yen G."/>
            <person name="Schwartz D.C."/>
            <person name="Welch R.A."/>
            <person name="Blattner F.R."/>
        </authorList>
    </citation>
    <scope>NUCLEOTIDE SEQUENCE [LARGE SCALE GENOMIC DNA]</scope>
    <source>
        <strain>O157:H7 / EDL933 / ATCC 700927 / EHEC</strain>
    </source>
</reference>
<reference key="2">
    <citation type="journal article" date="2001" name="DNA Res.">
        <title>Complete genome sequence of enterohemorrhagic Escherichia coli O157:H7 and genomic comparison with a laboratory strain K-12.</title>
        <authorList>
            <person name="Hayashi T."/>
            <person name="Makino K."/>
            <person name="Ohnishi M."/>
            <person name="Kurokawa K."/>
            <person name="Ishii K."/>
            <person name="Yokoyama K."/>
            <person name="Han C.-G."/>
            <person name="Ohtsubo E."/>
            <person name="Nakayama K."/>
            <person name="Murata T."/>
            <person name="Tanaka M."/>
            <person name="Tobe T."/>
            <person name="Iida T."/>
            <person name="Takami H."/>
            <person name="Honda T."/>
            <person name="Sasakawa C."/>
            <person name="Ogasawara N."/>
            <person name="Yasunaga T."/>
            <person name="Kuhara S."/>
            <person name="Shiba T."/>
            <person name="Hattori M."/>
            <person name="Shinagawa H."/>
        </authorList>
    </citation>
    <scope>NUCLEOTIDE SEQUENCE [LARGE SCALE GENOMIC DNA]</scope>
    <source>
        <strain>O157:H7 / Sakai / RIMD 0509952 / EHEC</strain>
    </source>
</reference>
<feature type="signal peptide" evidence="1">
    <location>
        <begin position="1"/>
        <end position="19"/>
    </location>
</feature>
<feature type="chain" id="PRO_0000333055" description="N-acetylneuraminate epimerase">
    <location>
        <begin position="20"/>
        <end position="368"/>
    </location>
</feature>
<feature type="repeat" description="Kelch 1">
    <location>
        <begin position="40"/>
        <end position="84"/>
    </location>
</feature>
<feature type="repeat" description="Kelch 2">
    <location>
        <begin position="86"/>
        <end position="137"/>
    </location>
</feature>
<feature type="repeat" description="Kelch 3">
    <location>
        <begin position="139"/>
        <end position="173"/>
    </location>
</feature>
<feature type="repeat" description="Kelch 4">
    <location>
        <begin position="174"/>
        <end position="219"/>
    </location>
</feature>
<feature type="repeat" description="Kelch 5">
    <location>
        <begin position="222"/>
        <end position="265"/>
    </location>
</feature>
<feature type="repeat" description="Kelch 6">
    <location>
        <begin position="287"/>
        <end position="336"/>
    </location>
</feature>
<feature type="repeat" description="Kelch 7">
    <location>
        <begin position="338"/>
        <end position="367"/>
    </location>
</feature>
<feature type="active site" description="Proton acceptor" evidence="1">
    <location>
        <position position="228"/>
    </location>
</feature>
<keyword id="KW-0119">Carbohydrate metabolism</keyword>
<keyword id="KW-0413">Isomerase</keyword>
<keyword id="KW-0880">Kelch repeat</keyword>
<keyword id="KW-0574">Periplasm</keyword>
<keyword id="KW-1185">Reference proteome</keyword>
<keyword id="KW-0677">Repeat</keyword>
<keyword id="KW-0732">Signal</keyword>
<gene>
    <name evidence="1" type="primary">nanM</name>
    <name type="ordered locus">Z5906</name>
    <name type="ordered locus">ECs5269</name>
</gene>
<sequence>MNKTITALAILMASFAANASVLPETPVPFKSGTGAIDNDTVYIGLGSAGTAWYKLETQAKDKKWTALAAFPGGPRDQATSAFIDGNLYVFGGIGKNSEGLTQVFNDVHKYNPKTNSWVKLISHAPMGMAGHVTFVHNGKAYVTGGVNQNIFNGYFEDLNEAGKDSTAVDKINAHYFDKKAEDYFFNKFLLSFDPSTQQWSYAGESPWYGTAGAAVVNKGDKTWLINGEAKPGLRTDAVFELDFTGNNLKWNRLAPVSSPDGVAGGFAGISNDSLIFAGGAGFKGSRENYQNGKNYAHEGLKKSYSTDIHLWHNGKWDKSGELSQGRAYGVSLPWNNSLLIIGGETAGGKAVTDSVLISVKDNKVTVQN</sequence>
<comment type="function">
    <text evidence="1">Converts alpha-N-acetylneuranimic acid (Neu5Ac) to the beta-anomer, accelerating the equilibrium between the alpha- and beta-anomers. Probably facilitates sialidase-negative bacteria to compete successfully for limited amounts of extracellular Neu5Ac, which is likely taken up in the beta-anomer. In addition, the rapid removal of sialic acid from solution might be advantageous to the bacterium to damp down host responses.</text>
</comment>
<comment type="catalytic activity">
    <reaction evidence="1">
        <text>N-acetyl-alpha-neuraminate = N-acetyl-beta-neuraminate</text>
        <dbReference type="Rhea" id="RHEA:25233"/>
        <dbReference type="ChEBI" id="CHEBI:58705"/>
        <dbReference type="ChEBI" id="CHEBI:58770"/>
        <dbReference type="EC" id="5.1.3.24"/>
    </reaction>
</comment>
<comment type="subunit">
    <text evidence="1">Homodimer.</text>
</comment>
<comment type="subcellular location">
    <subcellularLocation>
        <location evidence="1">Periplasm</location>
    </subcellularLocation>
</comment>
<comment type="similarity">
    <text evidence="1">Belongs to the NanM family.</text>
</comment>
<comment type="sequence caution" evidence="2">
    <conflict type="erroneous initiation">
        <sequence resource="EMBL-CDS" id="AAG59492"/>
    </conflict>
</comment>
<comment type="sequence caution" evidence="2">
    <conflict type="erroneous initiation">
        <sequence resource="EMBL-CDS" id="BAB38692"/>
    </conflict>
</comment>